<dbReference type="EC" id="1.4.1.4"/>
<dbReference type="EMBL" id="AE001439">
    <property type="protein sequence ID" value="AAD06574.1"/>
    <property type="molecule type" value="Genomic_DNA"/>
</dbReference>
<dbReference type="PIR" id="F71862">
    <property type="entry name" value="F71862"/>
</dbReference>
<dbReference type="RefSeq" id="WP_000289195.1">
    <property type="nucleotide sequence ID" value="NC_000921.1"/>
</dbReference>
<dbReference type="SMR" id="Q9ZKD8"/>
<dbReference type="IntAct" id="Q9ZKD8">
    <property type="interactions" value="1"/>
</dbReference>
<dbReference type="KEGG" id="hpj:jhp_1001"/>
<dbReference type="PATRIC" id="fig|85963.30.peg.1590"/>
<dbReference type="eggNOG" id="COG0334">
    <property type="taxonomic scope" value="Bacteria"/>
</dbReference>
<dbReference type="Proteomes" id="UP000000804">
    <property type="component" value="Chromosome"/>
</dbReference>
<dbReference type="GO" id="GO:0005737">
    <property type="term" value="C:cytoplasm"/>
    <property type="evidence" value="ECO:0000250"/>
    <property type="project" value="UniProtKB"/>
</dbReference>
<dbReference type="GO" id="GO:0005829">
    <property type="term" value="C:cytosol"/>
    <property type="evidence" value="ECO:0007669"/>
    <property type="project" value="TreeGrafter"/>
</dbReference>
<dbReference type="GO" id="GO:0004354">
    <property type="term" value="F:glutamate dehydrogenase (NADP+) activity"/>
    <property type="evidence" value="ECO:0000250"/>
    <property type="project" value="UniProtKB"/>
</dbReference>
<dbReference type="GO" id="GO:0006537">
    <property type="term" value="P:glutamate biosynthetic process"/>
    <property type="evidence" value="ECO:0000250"/>
    <property type="project" value="UniProtKB"/>
</dbReference>
<dbReference type="CDD" id="cd05313">
    <property type="entry name" value="NAD_bind_2_Glu_DH"/>
    <property type="match status" value="1"/>
</dbReference>
<dbReference type="FunFam" id="1.10.285.10:FF:000001">
    <property type="entry name" value="Glutamate dehydrogenase"/>
    <property type="match status" value="1"/>
</dbReference>
<dbReference type="FunFam" id="3.40.50.10860:FF:000002">
    <property type="entry name" value="Glutamate dehydrogenase"/>
    <property type="match status" value="1"/>
</dbReference>
<dbReference type="FunFam" id="3.40.50.720:FF:000030">
    <property type="entry name" value="Glutamate dehydrogenase"/>
    <property type="match status" value="1"/>
</dbReference>
<dbReference type="Gene3D" id="1.10.285.10">
    <property type="entry name" value="Glutamate Dehydrogenase, chain A, domain 3"/>
    <property type="match status" value="2"/>
</dbReference>
<dbReference type="Gene3D" id="3.40.50.10860">
    <property type="entry name" value="Leucine Dehydrogenase, chain A, domain 1"/>
    <property type="match status" value="1"/>
</dbReference>
<dbReference type="Gene3D" id="3.40.50.720">
    <property type="entry name" value="NAD(P)-binding Rossmann-like Domain"/>
    <property type="match status" value="1"/>
</dbReference>
<dbReference type="InterPro" id="IPR046346">
    <property type="entry name" value="Aminoacid_DH-like_N_sf"/>
</dbReference>
<dbReference type="InterPro" id="IPR006095">
    <property type="entry name" value="Glu/Leu/Phe/Val/Trp_DH"/>
</dbReference>
<dbReference type="InterPro" id="IPR006096">
    <property type="entry name" value="Glu/Leu/Phe/Val/Trp_DH_C"/>
</dbReference>
<dbReference type="InterPro" id="IPR006097">
    <property type="entry name" value="Glu/Leu/Phe/Val/Trp_DH_dimer"/>
</dbReference>
<dbReference type="InterPro" id="IPR033524">
    <property type="entry name" value="Glu/Leu/Phe/Val_DH_AS"/>
</dbReference>
<dbReference type="InterPro" id="IPR014362">
    <property type="entry name" value="Glu_DH"/>
</dbReference>
<dbReference type="InterPro" id="IPR050724">
    <property type="entry name" value="Glu_Leu_Phe_Val_DH"/>
</dbReference>
<dbReference type="InterPro" id="IPR036291">
    <property type="entry name" value="NAD(P)-bd_dom_sf"/>
</dbReference>
<dbReference type="InterPro" id="IPR033922">
    <property type="entry name" value="NAD_bind_Glu_DH"/>
</dbReference>
<dbReference type="NCBIfam" id="NF006929">
    <property type="entry name" value="PRK09414.1"/>
    <property type="match status" value="1"/>
</dbReference>
<dbReference type="PANTHER" id="PTHR43571">
    <property type="entry name" value="NADP-SPECIFIC GLUTAMATE DEHYDROGENASE 1-RELATED"/>
    <property type="match status" value="1"/>
</dbReference>
<dbReference type="PANTHER" id="PTHR43571:SF1">
    <property type="entry name" value="NADP-SPECIFIC GLUTAMATE DEHYDROGENASE 1-RELATED"/>
    <property type="match status" value="1"/>
</dbReference>
<dbReference type="Pfam" id="PF00208">
    <property type="entry name" value="ELFV_dehydrog"/>
    <property type="match status" value="1"/>
</dbReference>
<dbReference type="Pfam" id="PF02812">
    <property type="entry name" value="ELFV_dehydrog_N"/>
    <property type="match status" value="1"/>
</dbReference>
<dbReference type="PIRSF" id="PIRSF000185">
    <property type="entry name" value="Glu_DH"/>
    <property type="match status" value="1"/>
</dbReference>
<dbReference type="PRINTS" id="PR00082">
    <property type="entry name" value="GLFDHDRGNASE"/>
</dbReference>
<dbReference type="SMART" id="SM00839">
    <property type="entry name" value="ELFV_dehydrog"/>
    <property type="match status" value="1"/>
</dbReference>
<dbReference type="SUPFAM" id="SSF53223">
    <property type="entry name" value="Aminoacid dehydrogenase-like, N-terminal domain"/>
    <property type="match status" value="1"/>
</dbReference>
<dbReference type="SUPFAM" id="SSF51735">
    <property type="entry name" value="NAD(P)-binding Rossmann-fold domains"/>
    <property type="match status" value="1"/>
</dbReference>
<dbReference type="PROSITE" id="PS00074">
    <property type="entry name" value="GLFV_DEHYDROGENASE"/>
    <property type="match status" value="1"/>
</dbReference>
<sequence>MYVEKILQSLQKKYPYQKEFHQAVYEAITSLKPLLDSDKSYEKHAVLERLIEPEREIFFRVCWLDDNHQIQVNRGCRVEFNSAIGPYKGGLRFHPSVNESVIKFLGFEQVLKNSLTTLAMGGAKGGSDFDPKEKSEHEIMRFCQAFMNELYRHIGATTDVPAGDIGVGEREIGYLFGQYKKLVNRFEGVLTGKGLTYGGSLCRKEATGYGCVYFAEEMLQERNSSLEGKVCSVSGSGNVAIYTIEKLLQIGAKPVTASDSNGMIYDKDGIDLELLKEIKEARRGRIKEYALEKTSAKYTPTENYPKGGNAIWHVPCFAAFPSATENELSVLDAKTLLSNGCKCVAEGANMPSSNEAIELFLQAKISYGIGKAANAGGVSVSGLEMAQNASMHPWSFEVVDAKLHHIMKEIYKNVSQTAKEFKDPTNFVLGANIAGFRKVASAMIAQGV</sequence>
<evidence type="ECO:0000250" key="1"/>
<evidence type="ECO:0000255" key="2">
    <source>
        <dbReference type="PROSITE-ProRule" id="PRU10011"/>
    </source>
</evidence>
<evidence type="ECO:0000305" key="3"/>
<name>DHE4_HELPJ</name>
<comment type="function">
    <text evidence="1">Catalyzes the reversible oxidative deamination of glutamate to alpha-ketoglutarate and ammonia.</text>
</comment>
<comment type="catalytic activity">
    <reaction>
        <text>L-glutamate + NADP(+) + H2O = 2-oxoglutarate + NH4(+) + NADPH + H(+)</text>
        <dbReference type="Rhea" id="RHEA:11612"/>
        <dbReference type="ChEBI" id="CHEBI:15377"/>
        <dbReference type="ChEBI" id="CHEBI:15378"/>
        <dbReference type="ChEBI" id="CHEBI:16810"/>
        <dbReference type="ChEBI" id="CHEBI:28938"/>
        <dbReference type="ChEBI" id="CHEBI:29985"/>
        <dbReference type="ChEBI" id="CHEBI:57783"/>
        <dbReference type="ChEBI" id="CHEBI:58349"/>
        <dbReference type="EC" id="1.4.1.4"/>
    </reaction>
</comment>
<comment type="subunit">
    <text evidence="1">Homohexamer.</text>
</comment>
<comment type="similarity">
    <text evidence="3">Belongs to the Glu/Leu/Phe/Val dehydrogenases family.</text>
</comment>
<protein>
    <recommendedName>
        <fullName>NADP-specific glutamate dehydrogenase</fullName>
        <shortName>NADP-GDH</shortName>
        <ecNumber>1.4.1.4</ecNumber>
    </recommendedName>
</protein>
<reference key="1">
    <citation type="journal article" date="1999" name="Nature">
        <title>Genomic sequence comparison of two unrelated isolates of the human gastric pathogen Helicobacter pylori.</title>
        <authorList>
            <person name="Alm R.A."/>
            <person name="Ling L.-S.L."/>
            <person name="Moir D.T."/>
            <person name="King B.L."/>
            <person name="Brown E.D."/>
            <person name="Doig P.C."/>
            <person name="Smith D.R."/>
            <person name="Noonan B."/>
            <person name="Guild B.C."/>
            <person name="deJonge B.L."/>
            <person name="Carmel G."/>
            <person name="Tummino P.J."/>
            <person name="Caruso A."/>
            <person name="Uria-Nickelsen M."/>
            <person name="Mills D.M."/>
            <person name="Ives C."/>
            <person name="Gibson R."/>
            <person name="Merberg D."/>
            <person name="Mills S.D."/>
            <person name="Jiang Q."/>
            <person name="Taylor D.E."/>
            <person name="Vovis G.F."/>
            <person name="Trust T.J."/>
        </authorList>
    </citation>
    <scope>NUCLEOTIDE SEQUENCE [LARGE SCALE GENOMIC DNA]</scope>
    <source>
        <strain>J99 / ATCC 700824</strain>
    </source>
</reference>
<proteinExistence type="inferred from homology"/>
<keyword id="KW-0521">NADP</keyword>
<keyword id="KW-0560">Oxidoreductase</keyword>
<gene>
    <name type="primary">gdhA</name>
    <name type="ordered locus">jhp_1001</name>
</gene>
<organism>
    <name type="scientific">Helicobacter pylori (strain J99 / ATCC 700824)</name>
    <name type="common">Campylobacter pylori J99</name>
    <dbReference type="NCBI Taxonomy" id="85963"/>
    <lineage>
        <taxon>Bacteria</taxon>
        <taxon>Pseudomonadati</taxon>
        <taxon>Campylobacterota</taxon>
        <taxon>Epsilonproteobacteria</taxon>
        <taxon>Campylobacterales</taxon>
        <taxon>Helicobacteraceae</taxon>
        <taxon>Helicobacter</taxon>
    </lineage>
</organism>
<feature type="chain" id="PRO_0000182772" description="NADP-specific glutamate dehydrogenase">
    <location>
        <begin position="1"/>
        <end position="448"/>
    </location>
</feature>
<feature type="active site" description="Proton donor" evidence="2">
    <location>
        <position position="124"/>
    </location>
</feature>
<feature type="binding site" evidence="1">
    <location>
        <position position="88"/>
    </location>
    <ligand>
        <name>substrate</name>
    </ligand>
</feature>
<feature type="binding site" evidence="1">
    <location>
        <position position="109"/>
    </location>
    <ligand>
        <name>substrate</name>
    </ligand>
</feature>
<feature type="binding site" evidence="1">
    <location>
        <position position="112"/>
    </location>
    <ligand>
        <name>substrate</name>
    </ligand>
</feature>
<feature type="binding site" evidence="1">
    <location>
        <position position="163"/>
    </location>
    <ligand>
        <name>substrate</name>
    </ligand>
</feature>
<feature type="binding site" evidence="1">
    <location>
        <position position="207"/>
    </location>
    <ligand>
        <name>NADP(+)</name>
        <dbReference type="ChEBI" id="CHEBI:58349"/>
    </ligand>
</feature>
<feature type="binding site" evidence="1">
    <location>
        <position position="238"/>
    </location>
    <ligand>
        <name>NADP(+)</name>
        <dbReference type="ChEBI" id="CHEBI:58349"/>
    </ligand>
</feature>
<feature type="binding site" evidence="1">
    <location>
        <position position="381"/>
    </location>
    <ligand>
        <name>substrate</name>
    </ligand>
</feature>
<feature type="site" description="Important for catalysis" evidence="1">
    <location>
        <position position="164"/>
    </location>
</feature>
<accession>Q9ZKD8</accession>